<organism>
    <name type="scientific">Mycobacterium tuberculosis (strain ATCC 25177 / H37Ra)</name>
    <dbReference type="NCBI Taxonomy" id="419947"/>
    <lineage>
        <taxon>Bacteria</taxon>
        <taxon>Bacillati</taxon>
        <taxon>Actinomycetota</taxon>
        <taxon>Actinomycetes</taxon>
        <taxon>Mycobacteriales</taxon>
        <taxon>Mycobacteriaceae</taxon>
        <taxon>Mycobacterium</taxon>
        <taxon>Mycobacterium tuberculosis complex</taxon>
    </lineage>
</organism>
<name>LGT_MYCTA</name>
<reference key="1">
    <citation type="journal article" date="2008" name="PLoS ONE">
        <title>Genetic basis of virulence attenuation revealed by comparative genomic analysis of Mycobacterium tuberculosis strain H37Ra versus H37Rv.</title>
        <authorList>
            <person name="Zheng H."/>
            <person name="Lu L."/>
            <person name="Wang B."/>
            <person name="Pu S."/>
            <person name="Zhang X."/>
            <person name="Zhu G."/>
            <person name="Shi W."/>
            <person name="Zhang L."/>
            <person name="Wang H."/>
            <person name="Wang S."/>
            <person name="Zhao G."/>
            <person name="Zhang Y."/>
        </authorList>
    </citation>
    <scope>NUCLEOTIDE SEQUENCE [LARGE SCALE GENOMIC DNA]</scope>
    <source>
        <strain>ATCC 25177 / H37Ra</strain>
    </source>
</reference>
<protein>
    <recommendedName>
        <fullName evidence="1">Phosphatidylglycerol--prolipoprotein diacylglyceryl transferase</fullName>
        <ecNumber evidence="1">2.5.1.145</ecNumber>
    </recommendedName>
</protein>
<proteinExistence type="inferred from homology"/>
<comment type="function">
    <text evidence="1">Catalyzes the transfer of the diacylglyceryl group from phosphatidylglycerol to the sulfhydryl group of the N-terminal cysteine of a prolipoprotein, the first step in the formation of mature lipoproteins.</text>
</comment>
<comment type="catalytic activity">
    <reaction evidence="1">
        <text>L-cysteinyl-[prolipoprotein] + a 1,2-diacyl-sn-glycero-3-phospho-(1'-sn-glycerol) = an S-1,2-diacyl-sn-glyceryl-L-cysteinyl-[prolipoprotein] + sn-glycerol 1-phosphate + H(+)</text>
        <dbReference type="Rhea" id="RHEA:56712"/>
        <dbReference type="Rhea" id="RHEA-COMP:14679"/>
        <dbReference type="Rhea" id="RHEA-COMP:14680"/>
        <dbReference type="ChEBI" id="CHEBI:15378"/>
        <dbReference type="ChEBI" id="CHEBI:29950"/>
        <dbReference type="ChEBI" id="CHEBI:57685"/>
        <dbReference type="ChEBI" id="CHEBI:64716"/>
        <dbReference type="ChEBI" id="CHEBI:140658"/>
        <dbReference type="EC" id="2.5.1.145"/>
    </reaction>
</comment>
<comment type="pathway">
    <text evidence="1">Protein modification; lipoprotein biosynthesis (diacylglyceryl transfer).</text>
</comment>
<comment type="subcellular location">
    <subcellularLocation>
        <location evidence="1">Cell membrane</location>
        <topology evidence="1">Multi-pass membrane protein</topology>
    </subcellularLocation>
</comment>
<comment type="similarity">
    <text evidence="1">Belongs to the Lgt family.</text>
</comment>
<feature type="chain" id="PRO_1000053456" description="Phosphatidylglycerol--prolipoprotein diacylglyceryl transferase">
    <location>
        <begin position="1"/>
        <end position="468"/>
    </location>
</feature>
<feature type="transmembrane region" description="Helical" evidence="1">
    <location>
        <begin position="21"/>
        <end position="41"/>
    </location>
</feature>
<feature type="transmembrane region" description="Helical" evidence="1">
    <location>
        <begin position="56"/>
        <end position="76"/>
    </location>
</feature>
<feature type="transmembrane region" description="Helical" evidence="1">
    <location>
        <begin position="96"/>
        <end position="116"/>
    </location>
</feature>
<feature type="transmembrane region" description="Helical" evidence="1">
    <location>
        <begin position="192"/>
        <end position="212"/>
    </location>
</feature>
<feature type="transmembrane region" description="Helical" evidence="1">
    <location>
        <begin position="218"/>
        <end position="238"/>
    </location>
</feature>
<feature type="transmembrane region" description="Helical" evidence="1">
    <location>
        <begin position="256"/>
        <end position="276"/>
    </location>
</feature>
<feature type="region of interest" description="Disordered" evidence="2">
    <location>
        <begin position="349"/>
        <end position="468"/>
    </location>
</feature>
<feature type="compositionally biased region" description="Low complexity" evidence="2">
    <location>
        <begin position="391"/>
        <end position="406"/>
    </location>
</feature>
<feature type="compositionally biased region" description="Basic and acidic residues" evidence="2">
    <location>
        <begin position="445"/>
        <end position="455"/>
    </location>
</feature>
<feature type="compositionally biased region" description="Basic residues" evidence="2">
    <location>
        <begin position="456"/>
        <end position="468"/>
    </location>
</feature>
<feature type="binding site" evidence="1">
    <location>
        <position position="144"/>
    </location>
    <ligand>
        <name>a 1,2-diacyl-sn-glycero-3-phospho-(1'-sn-glycerol)</name>
        <dbReference type="ChEBI" id="CHEBI:64716"/>
    </ligand>
</feature>
<accession>A5U2X0</accession>
<evidence type="ECO:0000255" key="1">
    <source>
        <dbReference type="HAMAP-Rule" id="MF_01147"/>
    </source>
</evidence>
<evidence type="ECO:0000256" key="2">
    <source>
        <dbReference type="SAM" id="MobiDB-lite"/>
    </source>
</evidence>
<keyword id="KW-1003">Cell membrane</keyword>
<keyword id="KW-0472">Membrane</keyword>
<keyword id="KW-1185">Reference proteome</keyword>
<keyword id="KW-0808">Transferase</keyword>
<keyword id="KW-0812">Transmembrane</keyword>
<keyword id="KW-1133">Transmembrane helix</keyword>
<sequence length="468" mass="50392">MRMLPSYIPSPPRGVWYLGPLPVRAYAVCVITGIIVALLIGDRRLTARGGERGMTYDIALWAVPFGLIGGRLYHLATDWRTYFGDGGAGLAAALRIWDGGLGIWGAVTLGVMGAWIGCRRCGIPLPVLLDAVAPGVVLAQAIGRLGNYFNQELYGRETTMPWGLEIFYRRDPSGFDVPNSLDGVSTGQVAFVVQPTFLYELIWNVLVFVALIYIDRRFIIGHGRLFGFYVAFYCAGRFCVELLRDDPATLIAGIRINSFTSTFVFIGAVVYIILAPKGREAPGALRGSEYVVDEALEREPAELAAAAVASAASAVGPVGPGEPNQPDDVAEAVKAEVAEVTDEVAAESVVQVADRDGESTPAVEETSEADIEREQPGDLAGQAPAAHQVDAEAASAAPEEPAALASEAHDETEPEVPEKAAPIPDPAKPDELAVAGPGDDPAEPDGIRRQDDFSSRRRRWWRLRRRRQ</sequence>
<gene>
    <name evidence="1" type="primary">lgt</name>
    <name type="ordered locus">MRA_1624</name>
</gene>
<dbReference type="EC" id="2.5.1.145" evidence="1"/>
<dbReference type="EMBL" id="CP000611">
    <property type="protein sequence ID" value="ABQ73370.1"/>
    <property type="molecule type" value="Genomic_DNA"/>
</dbReference>
<dbReference type="RefSeq" id="WP_003408002.1">
    <property type="nucleotide sequence ID" value="NZ_CP016972.1"/>
</dbReference>
<dbReference type="SMR" id="A5U2X0"/>
<dbReference type="KEGG" id="mra:MRA_1624"/>
<dbReference type="eggNOG" id="COG0682">
    <property type="taxonomic scope" value="Bacteria"/>
</dbReference>
<dbReference type="HOGENOM" id="CLU_013386_2_1_11"/>
<dbReference type="UniPathway" id="UPA00664"/>
<dbReference type="Proteomes" id="UP000001988">
    <property type="component" value="Chromosome"/>
</dbReference>
<dbReference type="GO" id="GO:0005886">
    <property type="term" value="C:plasma membrane"/>
    <property type="evidence" value="ECO:0007669"/>
    <property type="project" value="UniProtKB-SubCell"/>
</dbReference>
<dbReference type="GO" id="GO:0008961">
    <property type="term" value="F:phosphatidylglycerol-prolipoprotein diacylglyceryl transferase activity"/>
    <property type="evidence" value="ECO:0007669"/>
    <property type="project" value="UniProtKB-UniRule"/>
</dbReference>
<dbReference type="GO" id="GO:0042158">
    <property type="term" value="P:lipoprotein biosynthetic process"/>
    <property type="evidence" value="ECO:0007669"/>
    <property type="project" value="UniProtKB-UniRule"/>
</dbReference>
<dbReference type="HAMAP" id="MF_01147">
    <property type="entry name" value="Lgt"/>
    <property type="match status" value="1"/>
</dbReference>
<dbReference type="InterPro" id="IPR001640">
    <property type="entry name" value="Lgt"/>
</dbReference>
<dbReference type="NCBIfam" id="TIGR00544">
    <property type="entry name" value="lgt"/>
    <property type="match status" value="1"/>
</dbReference>
<dbReference type="NCBIfam" id="NF009611">
    <property type="entry name" value="PRK13108.1"/>
    <property type="match status" value="1"/>
</dbReference>
<dbReference type="PANTHER" id="PTHR30589:SF0">
    <property type="entry name" value="PHOSPHATIDYLGLYCEROL--PROLIPOPROTEIN DIACYLGLYCERYL TRANSFERASE"/>
    <property type="match status" value="1"/>
</dbReference>
<dbReference type="PANTHER" id="PTHR30589">
    <property type="entry name" value="PROLIPOPROTEIN DIACYLGLYCERYL TRANSFERASE"/>
    <property type="match status" value="1"/>
</dbReference>
<dbReference type="Pfam" id="PF01790">
    <property type="entry name" value="LGT"/>
    <property type="match status" value="1"/>
</dbReference>
<dbReference type="PROSITE" id="PS01311">
    <property type="entry name" value="LGT"/>
    <property type="match status" value="1"/>
</dbReference>